<evidence type="ECO:0000250" key="1"/>
<evidence type="ECO:0000255" key="2"/>
<evidence type="ECO:0000305" key="3"/>
<sequence length="627" mass="72390">MIRYTVAGHSRRCVVGASKRVGAIKCITVAATKRFISNKSNEVFTKLTNDNDPKRDAFFKYTWGSWLKNDKQEKEKRFTKFSIEGLNRILNDIYIQSNEMAKAPDGKILPPVFNKNLTVSLVNNVVPKNIGKINPNEKVQVTTLSSIHEGKHHRIYKVDTNLNKAFILRIPYPLENENTLSYRIRSEVATMDFADLKLGIKVPKIFCYGVNSLNPVRQPFVLQEFIEGELLMKDWDPLIEDGSSNQKKYDNVIKQVSDFQSKLVSLKLNAFGSIYFNNDLKDGNEKEFVKEDIYDGETNPDLQNRWKIGPSVERCLWRHKSHLDFHKQMKPFLGPWPKKSPMDIIKNTGLLEAENAKTRIAMKEAGSSAELMYPRTLKEQITTYENLAKIAPDLFNVKTKAIPNMQELLSPRLFHPDLDPMNIIVNKEAQEAYLLDFEGACTKPFILQNSPQFIAYDGPKIYDLKEDITDFDKLSEAEKVQYQFMYKRTRNQHQWEKKLNDNNPKLITAVAPPVKLLRSPYIAAVERKTEEEYLLIDESLLQLKEVWDIFAQNDLVNQKKFPLNYSKEDIERHVEDLQKLHEKLISTPFAATQGWIPQDMFDQLLNSGSIVKQENGDYTVKQPEATK</sequence>
<accession>C7GRR3</accession>
<gene>
    <name type="primary">AIM9</name>
    <name type="synonym">FMP29</name>
    <name type="ORF">C1Q_03060</name>
</gene>
<keyword id="KW-0496">Mitochondrion</keyword>
<keyword id="KW-0809">Transit peptide</keyword>
<reference key="1">
    <citation type="journal article" date="2009" name="Genome Res.">
        <title>Genome structure of a Saccharomyces cerevisiae strain widely used in bioethanol production.</title>
        <authorList>
            <person name="Argueso J.L."/>
            <person name="Carazzolle M.F."/>
            <person name="Mieczkowski P.A."/>
            <person name="Duarte F.M."/>
            <person name="Netto O.V.C."/>
            <person name="Missawa S.K."/>
            <person name="Galzerani F."/>
            <person name="Costa G.G.L."/>
            <person name="Vidal R.O."/>
            <person name="Noronha M.F."/>
            <person name="Dominska M."/>
            <person name="Andrietta M.G.S."/>
            <person name="Andrietta S.R."/>
            <person name="Cunha A.F."/>
            <person name="Gomes L.H."/>
            <person name="Tavares F.C.A."/>
            <person name="Alcarde A.R."/>
            <person name="Dietrich F.S."/>
            <person name="McCusker J.H."/>
            <person name="Petes T.D."/>
            <person name="Pereira G.A.G."/>
        </authorList>
    </citation>
    <scope>NUCLEOTIDE SEQUENCE [LARGE SCALE GENOMIC DNA]</scope>
    <source>
        <strain>JAY291</strain>
    </source>
</reference>
<comment type="subcellular location">
    <subcellularLocation>
        <location evidence="1">Mitochondrion</location>
    </subcellularLocation>
</comment>
<comment type="similarity">
    <text evidence="3">Belongs to the AIM9 family.</text>
</comment>
<protein>
    <recommendedName>
        <fullName>Altered inheritance of mitochondria protein 9, mitochondrial</fullName>
    </recommendedName>
    <alternativeName>
        <fullName>Found in mitochondrial proteome protein 29</fullName>
    </alternativeName>
</protein>
<name>AIM9_YEAS2</name>
<dbReference type="EMBL" id="ACFL01000153">
    <property type="protein sequence ID" value="EEU06517.1"/>
    <property type="molecule type" value="Genomic_DNA"/>
</dbReference>
<dbReference type="OrthoDB" id="39361at4893"/>
<dbReference type="Proteomes" id="UP000008073">
    <property type="component" value="Unassembled WGS sequence"/>
</dbReference>
<dbReference type="GO" id="GO:0005739">
    <property type="term" value="C:mitochondrion"/>
    <property type="evidence" value="ECO:0007669"/>
    <property type="project" value="UniProtKB-SubCell"/>
</dbReference>
<dbReference type="InterPro" id="IPR011009">
    <property type="entry name" value="Kinase-like_dom_sf"/>
</dbReference>
<dbReference type="InterPro" id="IPR051035">
    <property type="entry name" value="Mito_inheritance_9"/>
</dbReference>
<dbReference type="PANTHER" id="PTHR36091">
    <property type="entry name" value="ALTERED INHERITANCE OF MITOCHONDRIA PROTEIN 9, MITOCHONDRIAL"/>
    <property type="match status" value="1"/>
</dbReference>
<dbReference type="PANTHER" id="PTHR36091:SF1">
    <property type="entry name" value="ALTERED INHERITANCE OF MITOCHONDRIA PROTEIN 9, MITOCHONDRIAL"/>
    <property type="match status" value="1"/>
</dbReference>
<dbReference type="SUPFAM" id="SSF56112">
    <property type="entry name" value="Protein kinase-like (PK-like)"/>
    <property type="match status" value="1"/>
</dbReference>
<proteinExistence type="inferred from homology"/>
<organism>
    <name type="scientific">Saccharomyces cerevisiae (strain JAY291)</name>
    <name type="common">Baker's yeast</name>
    <dbReference type="NCBI Taxonomy" id="574961"/>
    <lineage>
        <taxon>Eukaryota</taxon>
        <taxon>Fungi</taxon>
        <taxon>Dikarya</taxon>
        <taxon>Ascomycota</taxon>
        <taxon>Saccharomycotina</taxon>
        <taxon>Saccharomycetes</taxon>
        <taxon>Saccharomycetales</taxon>
        <taxon>Saccharomycetaceae</taxon>
        <taxon>Saccharomyces</taxon>
    </lineage>
</organism>
<feature type="transit peptide" description="Mitochondrion" evidence="2">
    <location>
        <begin position="1"/>
        <end position="43"/>
    </location>
</feature>
<feature type="chain" id="PRO_0000408732" description="Altered inheritance of mitochondria protein 9, mitochondrial">
    <location>
        <begin position="44"/>
        <end position="627"/>
    </location>
</feature>